<dbReference type="EC" id="3.1.21.2" evidence="1"/>
<dbReference type="EMBL" id="CP001407">
    <property type="protein sequence ID" value="ACO26296.1"/>
    <property type="molecule type" value="Genomic_DNA"/>
</dbReference>
<dbReference type="RefSeq" id="WP_000912466.1">
    <property type="nucleotide sequence ID" value="NZ_CP009318.1"/>
</dbReference>
<dbReference type="SMR" id="C1ES07"/>
<dbReference type="KEGG" id="bcx:BCA_4396"/>
<dbReference type="PATRIC" id="fig|572264.18.peg.4344"/>
<dbReference type="Proteomes" id="UP000002210">
    <property type="component" value="Chromosome"/>
</dbReference>
<dbReference type="GO" id="GO:0008833">
    <property type="term" value="F:deoxyribonuclease IV (phage-T4-induced) activity"/>
    <property type="evidence" value="ECO:0007669"/>
    <property type="project" value="UniProtKB-UniRule"/>
</dbReference>
<dbReference type="GO" id="GO:0003677">
    <property type="term" value="F:DNA binding"/>
    <property type="evidence" value="ECO:0007669"/>
    <property type="project" value="InterPro"/>
</dbReference>
<dbReference type="GO" id="GO:0003906">
    <property type="term" value="F:DNA-(apurinic or apyrimidinic site) endonuclease activity"/>
    <property type="evidence" value="ECO:0007669"/>
    <property type="project" value="TreeGrafter"/>
</dbReference>
<dbReference type="GO" id="GO:0008081">
    <property type="term" value="F:phosphoric diester hydrolase activity"/>
    <property type="evidence" value="ECO:0007669"/>
    <property type="project" value="TreeGrafter"/>
</dbReference>
<dbReference type="GO" id="GO:0008270">
    <property type="term" value="F:zinc ion binding"/>
    <property type="evidence" value="ECO:0007669"/>
    <property type="project" value="UniProtKB-UniRule"/>
</dbReference>
<dbReference type="GO" id="GO:0006284">
    <property type="term" value="P:base-excision repair"/>
    <property type="evidence" value="ECO:0007669"/>
    <property type="project" value="TreeGrafter"/>
</dbReference>
<dbReference type="CDD" id="cd00019">
    <property type="entry name" value="AP2Ec"/>
    <property type="match status" value="1"/>
</dbReference>
<dbReference type="FunFam" id="3.20.20.150:FF:000001">
    <property type="entry name" value="Probable endonuclease 4"/>
    <property type="match status" value="1"/>
</dbReference>
<dbReference type="Gene3D" id="3.20.20.150">
    <property type="entry name" value="Divalent-metal-dependent TIM barrel enzymes"/>
    <property type="match status" value="1"/>
</dbReference>
<dbReference type="HAMAP" id="MF_00152">
    <property type="entry name" value="Nfo"/>
    <property type="match status" value="1"/>
</dbReference>
<dbReference type="InterPro" id="IPR001719">
    <property type="entry name" value="AP_endonuc_2"/>
</dbReference>
<dbReference type="InterPro" id="IPR018246">
    <property type="entry name" value="AP_endonuc_F2_Zn_BS"/>
</dbReference>
<dbReference type="InterPro" id="IPR036237">
    <property type="entry name" value="Xyl_isomerase-like_sf"/>
</dbReference>
<dbReference type="InterPro" id="IPR013022">
    <property type="entry name" value="Xyl_isomerase-like_TIM-brl"/>
</dbReference>
<dbReference type="NCBIfam" id="TIGR00587">
    <property type="entry name" value="nfo"/>
    <property type="match status" value="1"/>
</dbReference>
<dbReference type="NCBIfam" id="NF002196">
    <property type="entry name" value="PRK01060.1-1"/>
    <property type="match status" value="1"/>
</dbReference>
<dbReference type="PANTHER" id="PTHR21445:SF0">
    <property type="entry name" value="APURINIC-APYRIMIDINIC ENDONUCLEASE"/>
    <property type="match status" value="1"/>
</dbReference>
<dbReference type="PANTHER" id="PTHR21445">
    <property type="entry name" value="ENDONUCLEASE IV ENDODEOXYRIBONUCLEASE IV"/>
    <property type="match status" value="1"/>
</dbReference>
<dbReference type="Pfam" id="PF01261">
    <property type="entry name" value="AP_endonuc_2"/>
    <property type="match status" value="1"/>
</dbReference>
<dbReference type="SMART" id="SM00518">
    <property type="entry name" value="AP2Ec"/>
    <property type="match status" value="1"/>
</dbReference>
<dbReference type="SUPFAM" id="SSF51658">
    <property type="entry name" value="Xylose isomerase-like"/>
    <property type="match status" value="1"/>
</dbReference>
<dbReference type="PROSITE" id="PS00729">
    <property type="entry name" value="AP_NUCLEASE_F2_1"/>
    <property type="match status" value="1"/>
</dbReference>
<dbReference type="PROSITE" id="PS00730">
    <property type="entry name" value="AP_NUCLEASE_F2_2"/>
    <property type="match status" value="1"/>
</dbReference>
<dbReference type="PROSITE" id="PS00731">
    <property type="entry name" value="AP_NUCLEASE_F2_3"/>
    <property type="match status" value="1"/>
</dbReference>
<dbReference type="PROSITE" id="PS51432">
    <property type="entry name" value="AP_NUCLEASE_F2_4"/>
    <property type="match status" value="1"/>
</dbReference>
<evidence type="ECO:0000255" key="1">
    <source>
        <dbReference type="HAMAP-Rule" id="MF_00152"/>
    </source>
</evidence>
<sequence>MLKIGSHVSMSGKKMLLAASEEAVSYGATTFMIYTGAPQNTRRKPIEELNIEAGRKHMEQNGIEEIIVHAPYIINVGNTTKPETFQLGVDFLRMEIERTSALGVAKQIVLHPGAHVGAGADAGIQQIIKGLNEVLTPDQTVNIALETMAGKGTECGRSFEEIAKIIDGVKYNEKLSVCFDTCHTHDAGYDIVNDFDGVLNEFDKIVGIDRLQVLHINDSKNVRGAGKDRHENIGFGHIGYKALHHIVHHPQLTHVPKILETPYVGEDKKDKKPPYKLEIEMLKNGTFDEGLLEKIKAQ</sequence>
<comment type="function">
    <text evidence="1">Endonuclease IV plays a role in DNA repair. It cleaves phosphodiester bonds at apurinic or apyrimidinic (AP) sites, generating a 3'-hydroxyl group and a 5'-terminal sugar phosphate.</text>
</comment>
<comment type="catalytic activity">
    <reaction evidence="1">
        <text>Endonucleolytic cleavage to 5'-phosphooligonucleotide end-products.</text>
        <dbReference type="EC" id="3.1.21.2"/>
    </reaction>
</comment>
<comment type="cofactor">
    <cofactor evidence="1">
        <name>Zn(2+)</name>
        <dbReference type="ChEBI" id="CHEBI:29105"/>
    </cofactor>
    <text evidence="1">Binds 3 Zn(2+) ions.</text>
</comment>
<comment type="similarity">
    <text evidence="1">Belongs to the AP endonuclease 2 family.</text>
</comment>
<organism>
    <name type="scientific">Bacillus cereus (strain 03BB102)</name>
    <dbReference type="NCBI Taxonomy" id="572264"/>
    <lineage>
        <taxon>Bacteria</taxon>
        <taxon>Bacillati</taxon>
        <taxon>Bacillota</taxon>
        <taxon>Bacilli</taxon>
        <taxon>Bacillales</taxon>
        <taxon>Bacillaceae</taxon>
        <taxon>Bacillus</taxon>
        <taxon>Bacillus cereus group</taxon>
    </lineage>
</organism>
<feature type="chain" id="PRO_1000123317" description="Probable endonuclease 4">
    <location>
        <begin position="1"/>
        <end position="298"/>
    </location>
</feature>
<feature type="binding site" evidence="1">
    <location>
        <position position="69"/>
    </location>
    <ligand>
        <name>Zn(2+)</name>
        <dbReference type="ChEBI" id="CHEBI:29105"/>
        <label>1</label>
    </ligand>
</feature>
<feature type="binding site" evidence="1">
    <location>
        <position position="111"/>
    </location>
    <ligand>
        <name>Zn(2+)</name>
        <dbReference type="ChEBI" id="CHEBI:29105"/>
        <label>1</label>
    </ligand>
</feature>
<feature type="binding site" evidence="1">
    <location>
        <position position="146"/>
    </location>
    <ligand>
        <name>Zn(2+)</name>
        <dbReference type="ChEBI" id="CHEBI:29105"/>
        <label>1</label>
    </ligand>
</feature>
<feature type="binding site" evidence="1">
    <location>
        <position position="146"/>
    </location>
    <ligand>
        <name>Zn(2+)</name>
        <dbReference type="ChEBI" id="CHEBI:29105"/>
        <label>2</label>
    </ligand>
</feature>
<feature type="binding site" evidence="1">
    <location>
        <position position="180"/>
    </location>
    <ligand>
        <name>Zn(2+)</name>
        <dbReference type="ChEBI" id="CHEBI:29105"/>
        <label>2</label>
    </ligand>
</feature>
<feature type="binding site" evidence="1">
    <location>
        <position position="183"/>
    </location>
    <ligand>
        <name>Zn(2+)</name>
        <dbReference type="ChEBI" id="CHEBI:29105"/>
        <label>3</label>
    </ligand>
</feature>
<feature type="binding site" evidence="1">
    <location>
        <position position="215"/>
    </location>
    <ligand>
        <name>Zn(2+)</name>
        <dbReference type="ChEBI" id="CHEBI:29105"/>
        <label>2</label>
    </ligand>
</feature>
<feature type="binding site" evidence="1">
    <location>
        <position position="228"/>
    </location>
    <ligand>
        <name>Zn(2+)</name>
        <dbReference type="ChEBI" id="CHEBI:29105"/>
        <label>3</label>
    </ligand>
</feature>
<feature type="binding site" evidence="1">
    <location>
        <position position="230"/>
    </location>
    <ligand>
        <name>Zn(2+)</name>
        <dbReference type="ChEBI" id="CHEBI:29105"/>
        <label>3</label>
    </ligand>
</feature>
<feature type="binding site" evidence="1">
    <location>
        <position position="260"/>
    </location>
    <ligand>
        <name>Zn(2+)</name>
        <dbReference type="ChEBI" id="CHEBI:29105"/>
        <label>2</label>
    </ligand>
</feature>
<keyword id="KW-0227">DNA damage</keyword>
<keyword id="KW-0234">DNA repair</keyword>
<keyword id="KW-0255">Endonuclease</keyword>
<keyword id="KW-0378">Hydrolase</keyword>
<keyword id="KW-0479">Metal-binding</keyword>
<keyword id="KW-0540">Nuclease</keyword>
<keyword id="KW-0862">Zinc</keyword>
<name>END4_BACC3</name>
<proteinExistence type="inferred from homology"/>
<reference key="1">
    <citation type="submission" date="2009-02" db="EMBL/GenBank/DDBJ databases">
        <title>Genome sequence of Bacillus cereus 03BB102.</title>
        <authorList>
            <person name="Dodson R.J."/>
            <person name="Jackson P."/>
            <person name="Munk A.C."/>
            <person name="Brettin T."/>
            <person name="Bruce D."/>
            <person name="Detter C."/>
            <person name="Tapia R."/>
            <person name="Han C."/>
            <person name="Sutton G."/>
            <person name="Sims D."/>
        </authorList>
    </citation>
    <scope>NUCLEOTIDE SEQUENCE [LARGE SCALE GENOMIC DNA]</scope>
    <source>
        <strain>03BB102</strain>
    </source>
</reference>
<protein>
    <recommendedName>
        <fullName evidence="1">Probable endonuclease 4</fullName>
        <ecNumber evidence="1">3.1.21.2</ecNumber>
    </recommendedName>
    <alternativeName>
        <fullName evidence="1">Endodeoxyribonuclease IV</fullName>
    </alternativeName>
    <alternativeName>
        <fullName evidence="1">Endonuclease IV</fullName>
    </alternativeName>
</protein>
<accession>C1ES07</accession>
<gene>
    <name evidence="1" type="primary">nfo</name>
    <name type="ordered locus">BCA_4396</name>
</gene>